<feature type="chain" id="PRO_0000126008" description="Small heat shock protein OV25-1">
    <location>
        <begin position="1"/>
        <end position="174"/>
    </location>
</feature>
<feature type="domain" description="sHSP" evidence="1">
    <location>
        <begin position="50"/>
        <end position="161"/>
    </location>
</feature>
<feature type="region of interest" description="Disordered" evidence="2">
    <location>
        <begin position="153"/>
        <end position="174"/>
    </location>
</feature>
<feature type="compositionally biased region" description="Basic and acidic residues" evidence="2">
    <location>
        <begin position="161"/>
        <end position="174"/>
    </location>
</feature>
<dbReference type="EMBL" id="X68668">
    <property type="protein sequence ID" value="CAA48632.1"/>
    <property type="molecule type" value="mRNA"/>
</dbReference>
<dbReference type="PIR" id="S29692">
    <property type="entry name" value="S29692"/>
</dbReference>
<dbReference type="SMR" id="P29778"/>
<dbReference type="STRING" id="6282.P29778"/>
<dbReference type="HOGENOM" id="CLU_095001_4_0_1"/>
<dbReference type="Proteomes" id="UP000024404">
    <property type="component" value="Unassembled WGS sequence"/>
</dbReference>
<dbReference type="GO" id="GO:0005737">
    <property type="term" value="C:cytoplasm"/>
    <property type="evidence" value="ECO:0007669"/>
    <property type="project" value="TreeGrafter"/>
</dbReference>
<dbReference type="GO" id="GO:0005634">
    <property type="term" value="C:nucleus"/>
    <property type="evidence" value="ECO:0007669"/>
    <property type="project" value="TreeGrafter"/>
</dbReference>
<dbReference type="GO" id="GO:0051082">
    <property type="term" value="F:unfolded protein binding"/>
    <property type="evidence" value="ECO:0007669"/>
    <property type="project" value="TreeGrafter"/>
</dbReference>
<dbReference type="GO" id="GO:0042026">
    <property type="term" value="P:protein refolding"/>
    <property type="evidence" value="ECO:0007669"/>
    <property type="project" value="TreeGrafter"/>
</dbReference>
<dbReference type="GO" id="GO:0009408">
    <property type="term" value="P:response to heat"/>
    <property type="evidence" value="ECO:0007669"/>
    <property type="project" value="TreeGrafter"/>
</dbReference>
<dbReference type="CDD" id="cd06526">
    <property type="entry name" value="metazoan_ACD"/>
    <property type="match status" value="1"/>
</dbReference>
<dbReference type="Gene3D" id="2.60.40.790">
    <property type="match status" value="1"/>
</dbReference>
<dbReference type="InterPro" id="IPR002068">
    <property type="entry name" value="A-crystallin/Hsp20_dom"/>
</dbReference>
<dbReference type="InterPro" id="IPR001436">
    <property type="entry name" value="Alpha-crystallin/sHSP_animal"/>
</dbReference>
<dbReference type="InterPro" id="IPR008978">
    <property type="entry name" value="HSP20-like_chaperone"/>
</dbReference>
<dbReference type="PANTHER" id="PTHR45640:SF13">
    <property type="entry name" value="HEAT SHOCK PROTEIN 22-RELATED"/>
    <property type="match status" value="1"/>
</dbReference>
<dbReference type="PANTHER" id="PTHR45640">
    <property type="entry name" value="HEAT SHOCK PROTEIN HSP-12.2-RELATED"/>
    <property type="match status" value="1"/>
</dbReference>
<dbReference type="Pfam" id="PF00011">
    <property type="entry name" value="HSP20"/>
    <property type="match status" value="1"/>
</dbReference>
<dbReference type="PRINTS" id="PR00299">
    <property type="entry name" value="ACRYSTALLIN"/>
</dbReference>
<dbReference type="SUPFAM" id="SSF49764">
    <property type="entry name" value="HSP20-like chaperones"/>
    <property type="match status" value="1"/>
</dbReference>
<dbReference type="PROSITE" id="PS01031">
    <property type="entry name" value="SHSP"/>
    <property type="match status" value="1"/>
</dbReference>
<protein>
    <recommendedName>
        <fullName>Small heat shock protein OV25-1</fullName>
    </recommendedName>
</protein>
<evidence type="ECO:0000255" key="1">
    <source>
        <dbReference type="PROSITE-ProRule" id="PRU00285"/>
    </source>
</evidence>
<evidence type="ECO:0000256" key="2">
    <source>
        <dbReference type="SAM" id="MobiDB-lite"/>
    </source>
</evidence>
<accession>P29778</accession>
<gene>
    <name type="primary">OV25-1</name>
</gene>
<name>OV251_ONCVO</name>
<keyword id="KW-1185">Reference proteome</keyword>
<keyword id="KW-0346">Stress response</keyword>
<comment type="similarity">
    <text evidence="1">Belongs to the small heat shock protein (HSP20) family.</text>
</comment>
<sequence length="174" mass="19935">MSLFRYNPRDYFYTSPMERFIVNLLDNTFDDRSSRPLHSVAPYWLHQPELNECNIGNTLGEVINEKDKFAVRADVSHFHPKELSVSVRDRELVIEGHHKERADSAGHGSIERHFIRKYVLPEEVQPDTIESHLSDKGVLTICANKTAVGTTASRNIPIRASPKEPEAKQKTKKQ</sequence>
<reference key="1">
    <citation type="submission" date="1992-10" db="EMBL/GenBank/DDBJ databases">
        <authorList>
            <person name="Hoefle W."/>
        </authorList>
    </citation>
    <scope>NUCLEOTIDE SEQUENCE [MRNA]</scope>
</reference>
<proteinExistence type="evidence at transcript level"/>
<organism>
    <name type="scientific">Onchocerca volvulus</name>
    <dbReference type="NCBI Taxonomy" id="6282"/>
    <lineage>
        <taxon>Eukaryota</taxon>
        <taxon>Metazoa</taxon>
        <taxon>Ecdysozoa</taxon>
        <taxon>Nematoda</taxon>
        <taxon>Chromadorea</taxon>
        <taxon>Rhabditida</taxon>
        <taxon>Spirurina</taxon>
        <taxon>Spiruromorpha</taxon>
        <taxon>Filarioidea</taxon>
        <taxon>Onchocercidae</taxon>
        <taxon>Onchocerca</taxon>
    </lineage>
</organism>